<name>COAD_MYCA9</name>
<protein>
    <recommendedName>
        <fullName evidence="1">Phosphopantetheine adenylyltransferase</fullName>
        <ecNumber evidence="1">2.7.7.3</ecNumber>
    </recommendedName>
    <alternativeName>
        <fullName evidence="1">Dephospho-CoA pyrophosphorylase</fullName>
    </alternativeName>
    <alternativeName>
        <fullName evidence="1">Pantetheine-phosphate adenylyltransferase</fullName>
        <shortName evidence="1">PPAT</shortName>
    </alternativeName>
</protein>
<reference key="1">
    <citation type="journal article" date="2009" name="PLoS ONE">
        <title>Non mycobacterial virulence genes in the genome of the emerging pathogen Mycobacterium abscessus.</title>
        <authorList>
            <person name="Ripoll F."/>
            <person name="Pasek S."/>
            <person name="Schenowitz C."/>
            <person name="Dossat C."/>
            <person name="Barbe V."/>
            <person name="Rottman M."/>
            <person name="Macheras E."/>
            <person name="Heym B."/>
            <person name="Herrmann J.L."/>
            <person name="Daffe M."/>
            <person name="Brosch R."/>
            <person name="Risler J.L."/>
            <person name="Gaillard J.L."/>
        </authorList>
    </citation>
    <scope>NUCLEOTIDE SEQUENCE [LARGE SCALE GENOMIC DNA]</scope>
    <source>
        <strain>ATCC 19977 / DSM 44196 / CCUG 20993 / CIP 104536 / JCM 13569 / NCTC 13031 / TMC 1543 / L948</strain>
    </source>
</reference>
<feature type="chain" id="PRO_1000096815" description="Phosphopantetheine adenylyltransferase">
    <location>
        <begin position="1"/>
        <end position="161"/>
    </location>
</feature>
<feature type="binding site" evidence="1">
    <location>
        <begin position="9"/>
        <end position="10"/>
    </location>
    <ligand>
        <name>ATP</name>
        <dbReference type="ChEBI" id="CHEBI:30616"/>
    </ligand>
</feature>
<feature type="binding site" evidence="1">
    <location>
        <position position="9"/>
    </location>
    <ligand>
        <name>substrate</name>
    </ligand>
</feature>
<feature type="binding site" evidence="1">
    <location>
        <position position="17"/>
    </location>
    <ligand>
        <name>ATP</name>
        <dbReference type="ChEBI" id="CHEBI:30616"/>
    </ligand>
</feature>
<feature type="binding site" evidence="1">
    <location>
        <position position="41"/>
    </location>
    <ligand>
        <name>substrate</name>
    </ligand>
</feature>
<feature type="binding site" evidence="1">
    <location>
        <position position="73"/>
    </location>
    <ligand>
        <name>substrate</name>
    </ligand>
</feature>
<feature type="binding site" evidence="1">
    <location>
        <position position="87"/>
    </location>
    <ligand>
        <name>substrate</name>
    </ligand>
</feature>
<feature type="binding site" evidence="1">
    <location>
        <begin position="88"/>
        <end position="90"/>
    </location>
    <ligand>
        <name>ATP</name>
        <dbReference type="ChEBI" id="CHEBI:30616"/>
    </ligand>
</feature>
<feature type="binding site" evidence="1">
    <location>
        <position position="98"/>
    </location>
    <ligand>
        <name>ATP</name>
        <dbReference type="ChEBI" id="CHEBI:30616"/>
    </ligand>
</feature>
<feature type="binding site" evidence="1">
    <location>
        <begin position="122"/>
        <end position="128"/>
    </location>
    <ligand>
        <name>ATP</name>
        <dbReference type="ChEBI" id="CHEBI:30616"/>
    </ligand>
</feature>
<feature type="site" description="Transition state stabilizer" evidence="1">
    <location>
        <position position="17"/>
    </location>
</feature>
<feature type="strand" evidence="3">
    <location>
        <begin position="3"/>
        <end position="8"/>
    </location>
</feature>
<feature type="helix" evidence="3">
    <location>
        <begin position="15"/>
        <end position="27"/>
    </location>
</feature>
<feature type="strand" evidence="3">
    <location>
        <begin position="28"/>
        <end position="36"/>
    </location>
</feature>
<feature type="strand" evidence="2">
    <location>
        <begin position="39"/>
        <end position="41"/>
    </location>
</feature>
<feature type="helix" evidence="3">
    <location>
        <begin position="47"/>
        <end position="57"/>
    </location>
</feature>
<feature type="turn" evidence="2">
    <location>
        <begin position="58"/>
        <end position="60"/>
    </location>
</feature>
<feature type="strand" evidence="3">
    <location>
        <begin position="64"/>
        <end position="69"/>
    </location>
</feature>
<feature type="helix" evidence="3">
    <location>
        <begin position="73"/>
        <end position="79"/>
    </location>
</feature>
<feature type="strand" evidence="3">
    <location>
        <begin position="84"/>
        <end position="89"/>
    </location>
</feature>
<feature type="helix" evidence="3">
    <location>
        <begin position="92"/>
        <end position="109"/>
    </location>
</feature>
<feature type="strand" evidence="3">
    <location>
        <begin position="112"/>
        <end position="117"/>
    </location>
</feature>
<feature type="helix" evidence="3">
    <location>
        <begin position="120"/>
        <end position="122"/>
    </location>
</feature>
<feature type="helix" evidence="3">
    <location>
        <begin position="127"/>
        <end position="135"/>
    </location>
</feature>
<feature type="turn" evidence="3">
    <location>
        <begin position="141"/>
        <end position="143"/>
    </location>
</feature>
<feature type="helix" evidence="3">
    <location>
        <begin position="146"/>
        <end position="156"/>
    </location>
</feature>
<comment type="function">
    <text evidence="1">Reversibly transfers an adenylyl group from ATP to 4'-phosphopantetheine, yielding dephospho-CoA (dPCoA) and pyrophosphate.</text>
</comment>
<comment type="catalytic activity">
    <reaction evidence="1">
        <text>(R)-4'-phosphopantetheine + ATP + H(+) = 3'-dephospho-CoA + diphosphate</text>
        <dbReference type="Rhea" id="RHEA:19801"/>
        <dbReference type="ChEBI" id="CHEBI:15378"/>
        <dbReference type="ChEBI" id="CHEBI:30616"/>
        <dbReference type="ChEBI" id="CHEBI:33019"/>
        <dbReference type="ChEBI" id="CHEBI:57328"/>
        <dbReference type="ChEBI" id="CHEBI:61723"/>
        <dbReference type="EC" id="2.7.7.3"/>
    </reaction>
</comment>
<comment type="cofactor">
    <cofactor evidence="1">
        <name>Mg(2+)</name>
        <dbReference type="ChEBI" id="CHEBI:18420"/>
    </cofactor>
</comment>
<comment type="pathway">
    <text evidence="1">Cofactor biosynthesis; coenzyme A biosynthesis; CoA from (R)-pantothenate: step 4/5.</text>
</comment>
<comment type="subunit">
    <text evidence="1">Homohexamer.</text>
</comment>
<comment type="subcellular location">
    <subcellularLocation>
        <location evidence="1">Cytoplasm</location>
    </subcellularLocation>
</comment>
<comment type="similarity">
    <text evidence="1">Belongs to the bacterial CoaD family.</text>
</comment>
<accession>B1MDL6</accession>
<gene>
    <name evidence="1" type="primary">coaD</name>
    <name type="ordered locus">MAB_3259c</name>
</gene>
<keyword id="KW-0002">3D-structure</keyword>
<keyword id="KW-0067">ATP-binding</keyword>
<keyword id="KW-0173">Coenzyme A biosynthesis</keyword>
<keyword id="KW-0963">Cytoplasm</keyword>
<keyword id="KW-0460">Magnesium</keyword>
<keyword id="KW-0547">Nucleotide-binding</keyword>
<keyword id="KW-0548">Nucleotidyltransferase</keyword>
<keyword id="KW-1185">Reference proteome</keyword>
<keyword id="KW-0808">Transferase</keyword>
<dbReference type="EC" id="2.7.7.3" evidence="1"/>
<dbReference type="EMBL" id="CU458896">
    <property type="protein sequence ID" value="CAM63335.1"/>
    <property type="molecule type" value="Genomic_DNA"/>
</dbReference>
<dbReference type="RefSeq" id="WP_005056942.1">
    <property type="nucleotide sequence ID" value="NZ_MLCG01000001.1"/>
</dbReference>
<dbReference type="PDB" id="5O06">
    <property type="method" value="X-ray"/>
    <property type="resolution" value="1.55 A"/>
    <property type="chains" value="A/B/C=1-161"/>
</dbReference>
<dbReference type="PDB" id="5O08">
    <property type="method" value="X-ray"/>
    <property type="resolution" value="1.55 A"/>
    <property type="chains" value="A/B/C=1-161"/>
</dbReference>
<dbReference type="PDB" id="5O0A">
    <property type="method" value="X-ray"/>
    <property type="resolution" value="1.80 A"/>
    <property type="chains" value="A/B/C=1-161"/>
</dbReference>
<dbReference type="PDB" id="5O0B">
    <property type="method" value="X-ray"/>
    <property type="resolution" value="1.74 A"/>
    <property type="chains" value="A/B/C=1-161"/>
</dbReference>
<dbReference type="PDB" id="5O0C">
    <property type="method" value="X-ray"/>
    <property type="resolution" value="1.64 A"/>
    <property type="chains" value="A/B/C=1-161"/>
</dbReference>
<dbReference type="PDB" id="5O0D">
    <property type="method" value="X-ray"/>
    <property type="resolution" value="1.54 A"/>
    <property type="chains" value="A/B/C=1-161"/>
</dbReference>
<dbReference type="PDB" id="5O0F">
    <property type="method" value="X-ray"/>
    <property type="resolution" value="1.70 A"/>
    <property type="chains" value="A/B/C=1-161"/>
</dbReference>
<dbReference type="PDB" id="5O0H">
    <property type="method" value="X-ray"/>
    <property type="resolution" value="1.60 A"/>
    <property type="chains" value="A/B/C=1-161"/>
</dbReference>
<dbReference type="PDB" id="7YWM">
    <property type="method" value="X-ray"/>
    <property type="resolution" value="1.62 A"/>
    <property type="chains" value="A/B/C=1-161"/>
</dbReference>
<dbReference type="PDB" id="7YXZ">
    <property type="method" value="X-ray"/>
    <property type="resolution" value="1.78 A"/>
    <property type="chains" value="A/B/C=1-161"/>
</dbReference>
<dbReference type="PDB" id="7YY0">
    <property type="method" value="X-ray"/>
    <property type="resolution" value="1.75 A"/>
    <property type="chains" value="A/B/C=1-161"/>
</dbReference>
<dbReference type="PDB" id="7YY1">
    <property type="method" value="X-ray"/>
    <property type="resolution" value="1.70 A"/>
    <property type="chains" value="A/B/C=1-161"/>
</dbReference>
<dbReference type="PDB" id="7YY2">
    <property type="method" value="X-ray"/>
    <property type="resolution" value="1.60 A"/>
    <property type="chains" value="A/B/C=1-161"/>
</dbReference>
<dbReference type="PDB" id="7YY3">
    <property type="method" value="X-ray"/>
    <property type="resolution" value="1.53 A"/>
    <property type="chains" value="A/B/C=1-161"/>
</dbReference>
<dbReference type="PDB" id="7YY4">
    <property type="method" value="X-ray"/>
    <property type="resolution" value="1.67 A"/>
    <property type="chains" value="A/B/C=1-161"/>
</dbReference>
<dbReference type="PDB" id="7YY5">
    <property type="method" value="X-ray"/>
    <property type="resolution" value="1.50 A"/>
    <property type="chains" value="A/B/C=1-161"/>
</dbReference>
<dbReference type="PDB" id="7YY6">
    <property type="method" value="X-ray"/>
    <property type="resolution" value="1.51 A"/>
    <property type="chains" value="A/B/C=1-161"/>
</dbReference>
<dbReference type="PDB" id="7YY7">
    <property type="method" value="X-ray"/>
    <property type="resolution" value="1.54 A"/>
    <property type="chains" value="A/B/C=1-161"/>
</dbReference>
<dbReference type="PDB" id="7YY8">
    <property type="method" value="X-ray"/>
    <property type="resolution" value="1.52 A"/>
    <property type="chains" value="A/B/C=1-161"/>
</dbReference>
<dbReference type="PDB" id="7YY9">
    <property type="method" value="X-ray"/>
    <property type="resolution" value="1.49 A"/>
    <property type="chains" value="A/B/C=1-161"/>
</dbReference>
<dbReference type="PDB" id="7YYA">
    <property type="method" value="X-ray"/>
    <property type="resolution" value="1.81 A"/>
    <property type="chains" value="A/B/C=1-161"/>
</dbReference>
<dbReference type="PDB" id="7YYB">
    <property type="method" value="X-ray"/>
    <property type="resolution" value="1.75 A"/>
    <property type="chains" value="A/B/C=1-161"/>
</dbReference>
<dbReference type="PDB" id="7YYC">
    <property type="method" value="X-ray"/>
    <property type="resolution" value="1.50 A"/>
    <property type="chains" value="A/B/C=1-161"/>
</dbReference>
<dbReference type="PDB" id="8QID">
    <property type="method" value="X-ray"/>
    <property type="resolution" value="1.73 A"/>
    <property type="chains" value="A/B/C=1-161"/>
</dbReference>
<dbReference type="PDB" id="8QIX">
    <property type="method" value="X-ray"/>
    <property type="resolution" value="1.58 A"/>
    <property type="chains" value="A/B/C=1-161"/>
</dbReference>
<dbReference type="PDB" id="8QIY">
    <property type="method" value="X-ray"/>
    <property type="resolution" value="1.51 A"/>
    <property type="chains" value="A/B/C=1-161"/>
</dbReference>
<dbReference type="PDB" id="8QJ8">
    <property type="method" value="X-ray"/>
    <property type="resolution" value="1.54 A"/>
    <property type="chains" value="A/B/C=1-161"/>
</dbReference>
<dbReference type="PDBsum" id="5O06"/>
<dbReference type="PDBsum" id="5O08"/>
<dbReference type="PDBsum" id="5O0A"/>
<dbReference type="PDBsum" id="5O0B"/>
<dbReference type="PDBsum" id="5O0C"/>
<dbReference type="PDBsum" id="5O0D"/>
<dbReference type="PDBsum" id="5O0F"/>
<dbReference type="PDBsum" id="5O0H"/>
<dbReference type="PDBsum" id="7YWM"/>
<dbReference type="PDBsum" id="7YXZ"/>
<dbReference type="PDBsum" id="7YY0"/>
<dbReference type="PDBsum" id="7YY1"/>
<dbReference type="PDBsum" id="7YY2"/>
<dbReference type="PDBsum" id="7YY3"/>
<dbReference type="PDBsum" id="7YY4"/>
<dbReference type="PDBsum" id="7YY5"/>
<dbReference type="PDBsum" id="7YY6"/>
<dbReference type="PDBsum" id="7YY7"/>
<dbReference type="PDBsum" id="7YY8"/>
<dbReference type="PDBsum" id="7YY9"/>
<dbReference type="PDBsum" id="7YYA"/>
<dbReference type="PDBsum" id="7YYB"/>
<dbReference type="PDBsum" id="7YYC"/>
<dbReference type="PDBsum" id="8QID"/>
<dbReference type="PDBsum" id="8QIX"/>
<dbReference type="PDBsum" id="8QIY"/>
<dbReference type="PDBsum" id="8QJ8"/>
<dbReference type="SMR" id="B1MDL6"/>
<dbReference type="GeneID" id="93380191"/>
<dbReference type="KEGG" id="mab:MAB_3259c"/>
<dbReference type="UniPathway" id="UPA00241">
    <property type="reaction ID" value="UER00355"/>
</dbReference>
<dbReference type="Proteomes" id="UP000007137">
    <property type="component" value="Chromosome"/>
</dbReference>
<dbReference type="GO" id="GO:0005737">
    <property type="term" value="C:cytoplasm"/>
    <property type="evidence" value="ECO:0007669"/>
    <property type="project" value="UniProtKB-SubCell"/>
</dbReference>
<dbReference type="GO" id="GO:0005524">
    <property type="term" value="F:ATP binding"/>
    <property type="evidence" value="ECO:0007669"/>
    <property type="project" value="UniProtKB-KW"/>
</dbReference>
<dbReference type="GO" id="GO:0004595">
    <property type="term" value="F:pantetheine-phosphate adenylyltransferase activity"/>
    <property type="evidence" value="ECO:0007669"/>
    <property type="project" value="UniProtKB-UniRule"/>
</dbReference>
<dbReference type="GO" id="GO:0015937">
    <property type="term" value="P:coenzyme A biosynthetic process"/>
    <property type="evidence" value="ECO:0007669"/>
    <property type="project" value="UniProtKB-UniRule"/>
</dbReference>
<dbReference type="CDD" id="cd02163">
    <property type="entry name" value="PPAT"/>
    <property type="match status" value="1"/>
</dbReference>
<dbReference type="FunFam" id="3.40.50.620:FF:000012">
    <property type="entry name" value="Phosphopantetheine adenylyltransferase"/>
    <property type="match status" value="1"/>
</dbReference>
<dbReference type="Gene3D" id="3.40.50.620">
    <property type="entry name" value="HUPs"/>
    <property type="match status" value="1"/>
</dbReference>
<dbReference type="HAMAP" id="MF_00151">
    <property type="entry name" value="PPAT_bact"/>
    <property type="match status" value="1"/>
</dbReference>
<dbReference type="InterPro" id="IPR004821">
    <property type="entry name" value="Cyt_trans-like"/>
</dbReference>
<dbReference type="InterPro" id="IPR001980">
    <property type="entry name" value="PPAT"/>
</dbReference>
<dbReference type="InterPro" id="IPR014729">
    <property type="entry name" value="Rossmann-like_a/b/a_fold"/>
</dbReference>
<dbReference type="NCBIfam" id="TIGR01510">
    <property type="entry name" value="coaD_prev_kdtB"/>
    <property type="match status" value="1"/>
</dbReference>
<dbReference type="NCBIfam" id="TIGR00125">
    <property type="entry name" value="cyt_tran_rel"/>
    <property type="match status" value="1"/>
</dbReference>
<dbReference type="PANTHER" id="PTHR21342">
    <property type="entry name" value="PHOSPHOPANTETHEINE ADENYLYLTRANSFERASE"/>
    <property type="match status" value="1"/>
</dbReference>
<dbReference type="PANTHER" id="PTHR21342:SF1">
    <property type="entry name" value="PHOSPHOPANTETHEINE ADENYLYLTRANSFERASE"/>
    <property type="match status" value="1"/>
</dbReference>
<dbReference type="Pfam" id="PF01467">
    <property type="entry name" value="CTP_transf_like"/>
    <property type="match status" value="1"/>
</dbReference>
<dbReference type="PRINTS" id="PR01020">
    <property type="entry name" value="LPSBIOSNTHSS"/>
</dbReference>
<dbReference type="SUPFAM" id="SSF52374">
    <property type="entry name" value="Nucleotidylyl transferase"/>
    <property type="match status" value="1"/>
</dbReference>
<organism>
    <name type="scientific">Mycobacteroides abscessus (strain ATCC 19977 / DSM 44196 / CCUG 20993 / CIP 104536 / JCM 13569 / NCTC 13031 / TMC 1543 / L948)</name>
    <name type="common">Mycobacterium abscessus</name>
    <dbReference type="NCBI Taxonomy" id="561007"/>
    <lineage>
        <taxon>Bacteria</taxon>
        <taxon>Bacillati</taxon>
        <taxon>Actinomycetota</taxon>
        <taxon>Actinomycetes</taxon>
        <taxon>Mycobacteriales</taxon>
        <taxon>Mycobacteriaceae</taxon>
        <taxon>Mycobacteroides</taxon>
        <taxon>Mycobacteroides abscessus</taxon>
    </lineage>
</organism>
<proteinExistence type="evidence at protein level"/>
<sequence>MTGAVCPGSFDPVTLGHLDVFERAAAQFDEVIVAVLINPNKAGMFTVDERIEMIRESTADLPNLRVESGQGLLVDFVRERGLNAIVKGLRTGTDFEYELQMAQMNKHIAGVDTFFVATAPAYSFVSSSLAKEVATYGGDVSALLPASVHQRLLGKLRGQAQ</sequence>
<evidence type="ECO:0000255" key="1">
    <source>
        <dbReference type="HAMAP-Rule" id="MF_00151"/>
    </source>
</evidence>
<evidence type="ECO:0007829" key="2">
    <source>
        <dbReference type="PDB" id="5O0H"/>
    </source>
</evidence>
<evidence type="ECO:0007829" key="3">
    <source>
        <dbReference type="PDB" id="7YY9"/>
    </source>
</evidence>